<reference key="1">
    <citation type="journal article" date="2004" name="J. Biol. Chem.">
        <title>A novel human Cl(-) channel family related to Drosophila flightless locus.</title>
        <authorList>
            <person name="Suzuki M."/>
            <person name="Mizuno A."/>
        </authorList>
    </citation>
    <scope>NUCLEOTIDE SEQUENCE [MRNA] (ISOFORM 1)</scope>
    <scope>FUNCTION</scope>
    <scope>SUBCELLULAR LOCATION</scope>
    <scope>TISSUE SPECIFICITY</scope>
    <scope>GLYCOSYLATION</scope>
    <scope>GLYCOSYLATION AT ASN-351</scope>
    <scope>TOPOLOGY</scope>
    <scope>MUTAGENESIS OF THR-128; THR-146; THR-353; ARG-367 AND HIS-370</scope>
    <scope>TRANSPORTER ACTIVITY</scope>
</reference>
<reference key="2">
    <citation type="journal article" date="2000" name="DNA Res.">
        <title>Prediction of the coding sequences of unidentified human genes. XIX. The complete sequences of 100 new cDNA clones from brain which code for large proteins in vitro.</title>
        <authorList>
            <person name="Nagase T."/>
            <person name="Kikuno R."/>
            <person name="Hattori A."/>
            <person name="Kondo Y."/>
            <person name="Okumura K."/>
            <person name="Ohara O."/>
        </authorList>
    </citation>
    <scope>NUCLEOTIDE SEQUENCE [LARGE SCALE MRNA] (ISOFORM 1)</scope>
    <source>
        <tissue>Brain</tissue>
    </source>
</reference>
<reference key="3">
    <citation type="journal article" date="2002" name="DNA Res.">
        <title>Construction of expression-ready cDNA clones for KIAA genes: manual curation of 330 KIAA cDNA clones.</title>
        <authorList>
            <person name="Nakajima D."/>
            <person name="Okazaki N."/>
            <person name="Yamakawa H."/>
            <person name="Kikuno R."/>
            <person name="Ohara O."/>
            <person name="Nagase T."/>
        </authorList>
    </citation>
    <scope>SEQUENCE REVISION</scope>
</reference>
<reference key="4">
    <citation type="journal article" date="2004" name="Nat. Genet.">
        <title>Complete sequencing and characterization of 21,243 full-length human cDNAs.</title>
        <authorList>
            <person name="Ota T."/>
            <person name="Suzuki Y."/>
            <person name="Nishikawa T."/>
            <person name="Otsuki T."/>
            <person name="Sugiyama T."/>
            <person name="Irie R."/>
            <person name="Wakamatsu A."/>
            <person name="Hayashi K."/>
            <person name="Sato H."/>
            <person name="Nagai K."/>
            <person name="Kimura K."/>
            <person name="Makita H."/>
            <person name="Sekine M."/>
            <person name="Obayashi M."/>
            <person name="Nishi T."/>
            <person name="Shibahara T."/>
            <person name="Tanaka T."/>
            <person name="Ishii S."/>
            <person name="Yamamoto J."/>
            <person name="Saito K."/>
            <person name="Kawai Y."/>
            <person name="Isono Y."/>
            <person name="Nakamura Y."/>
            <person name="Nagahari K."/>
            <person name="Murakami K."/>
            <person name="Yasuda T."/>
            <person name="Iwayanagi T."/>
            <person name="Wagatsuma M."/>
            <person name="Shiratori A."/>
            <person name="Sudo H."/>
            <person name="Hosoiri T."/>
            <person name="Kaku Y."/>
            <person name="Kodaira H."/>
            <person name="Kondo H."/>
            <person name="Sugawara M."/>
            <person name="Takahashi M."/>
            <person name="Kanda K."/>
            <person name="Yokoi T."/>
            <person name="Furuya T."/>
            <person name="Kikkawa E."/>
            <person name="Omura Y."/>
            <person name="Abe K."/>
            <person name="Kamihara K."/>
            <person name="Katsuta N."/>
            <person name="Sato K."/>
            <person name="Tanikawa M."/>
            <person name="Yamazaki M."/>
            <person name="Ninomiya K."/>
            <person name="Ishibashi T."/>
            <person name="Yamashita H."/>
            <person name="Murakawa K."/>
            <person name="Fujimori K."/>
            <person name="Tanai H."/>
            <person name="Kimata M."/>
            <person name="Watanabe M."/>
            <person name="Hiraoka S."/>
            <person name="Chiba Y."/>
            <person name="Ishida S."/>
            <person name="Ono Y."/>
            <person name="Takiguchi S."/>
            <person name="Watanabe S."/>
            <person name="Yosida M."/>
            <person name="Hotuta T."/>
            <person name="Kusano J."/>
            <person name="Kanehori K."/>
            <person name="Takahashi-Fujii A."/>
            <person name="Hara H."/>
            <person name="Tanase T.-O."/>
            <person name="Nomura Y."/>
            <person name="Togiya S."/>
            <person name="Komai F."/>
            <person name="Hara R."/>
            <person name="Takeuchi K."/>
            <person name="Arita M."/>
            <person name="Imose N."/>
            <person name="Musashino K."/>
            <person name="Yuuki H."/>
            <person name="Oshima A."/>
            <person name="Sasaki N."/>
            <person name="Aotsuka S."/>
            <person name="Yoshikawa Y."/>
            <person name="Matsunawa H."/>
            <person name="Ichihara T."/>
            <person name="Shiohata N."/>
            <person name="Sano S."/>
            <person name="Moriya S."/>
            <person name="Momiyama H."/>
            <person name="Satoh N."/>
            <person name="Takami S."/>
            <person name="Terashima Y."/>
            <person name="Suzuki O."/>
            <person name="Nakagawa S."/>
            <person name="Senoh A."/>
            <person name="Mizoguchi H."/>
            <person name="Goto Y."/>
            <person name="Shimizu F."/>
            <person name="Wakebe H."/>
            <person name="Hishigaki H."/>
            <person name="Watanabe T."/>
            <person name="Sugiyama A."/>
            <person name="Takemoto M."/>
            <person name="Kawakami B."/>
            <person name="Yamazaki M."/>
            <person name="Watanabe K."/>
            <person name="Kumagai A."/>
            <person name="Itakura S."/>
            <person name="Fukuzumi Y."/>
            <person name="Fujimori Y."/>
            <person name="Komiyama M."/>
            <person name="Tashiro H."/>
            <person name="Tanigami A."/>
            <person name="Fujiwara T."/>
            <person name="Ono T."/>
            <person name="Yamada K."/>
            <person name="Fujii Y."/>
            <person name="Ozaki K."/>
            <person name="Hirao M."/>
            <person name="Ohmori Y."/>
            <person name="Kawabata A."/>
            <person name="Hikiji T."/>
            <person name="Kobatake N."/>
            <person name="Inagaki H."/>
            <person name="Ikema Y."/>
            <person name="Okamoto S."/>
            <person name="Okitani R."/>
            <person name="Kawakami T."/>
            <person name="Noguchi S."/>
            <person name="Itoh T."/>
            <person name="Shigeta K."/>
            <person name="Senba T."/>
            <person name="Matsumura K."/>
            <person name="Nakajima Y."/>
            <person name="Mizuno T."/>
            <person name="Morinaga M."/>
            <person name="Sasaki M."/>
            <person name="Togashi T."/>
            <person name="Oyama M."/>
            <person name="Hata H."/>
            <person name="Watanabe M."/>
            <person name="Komatsu T."/>
            <person name="Mizushima-Sugano J."/>
            <person name="Satoh T."/>
            <person name="Shirai Y."/>
            <person name="Takahashi Y."/>
            <person name="Nakagawa K."/>
            <person name="Okumura K."/>
            <person name="Nagase T."/>
            <person name="Nomura N."/>
            <person name="Kikuchi H."/>
            <person name="Masuho Y."/>
            <person name="Yamashita R."/>
            <person name="Nakai K."/>
            <person name="Yada T."/>
            <person name="Nakamura Y."/>
            <person name="Ohara O."/>
            <person name="Isogai T."/>
            <person name="Sugano S."/>
        </authorList>
    </citation>
    <scope>NUCLEOTIDE SEQUENCE [LARGE SCALE MRNA] (ISOFORM 3)</scope>
    <source>
        <tissue>Cerebellum</tissue>
    </source>
</reference>
<reference key="5">
    <citation type="journal article" date="2003" name="Nature">
        <title>The DNA sequence of human chromosome 7.</title>
        <authorList>
            <person name="Hillier L.W."/>
            <person name="Fulton R.S."/>
            <person name="Fulton L.A."/>
            <person name="Graves T.A."/>
            <person name="Pepin K.H."/>
            <person name="Wagner-McPherson C."/>
            <person name="Layman D."/>
            <person name="Maas J."/>
            <person name="Jaeger S."/>
            <person name="Walker R."/>
            <person name="Wylie K."/>
            <person name="Sekhon M."/>
            <person name="Becker M.C."/>
            <person name="O'Laughlin M.D."/>
            <person name="Schaller M.E."/>
            <person name="Fewell G.A."/>
            <person name="Delehaunty K.D."/>
            <person name="Miner T.L."/>
            <person name="Nash W.E."/>
            <person name="Cordes M."/>
            <person name="Du H."/>
            <person name="Sun H."/>
            <person name="Edwards J."/>
            <person name="Bradshaw-Cordum H."/>
            <person name="Ali J."/>
            <person name="Andrews S."/>
            <person name="Isak A."/>
            <person name="Vanbrunt A."/>
            <person name="Nguyen C."/>
            <person name="Du F."/>
            <person name="Lamar B."/>
            <person name="Courtney L."/>
            <person name="Kalicki J."/>
            <person name="Ozersky P."/>
            <person name="Bielicki L."/>
            <person name="Scott K."/>
            <person name="Holmes A."/>
            <person name="Harkins R."/>
            <person name="Harris A."/>
            <person name="Strong C.M."/>
            <person name="Hou S."/>
            <person name="Tomlinson C."/>
            <person name="Dauphin-Kohlberg S."/>
            <person name="Kozlowicz-Reilly A."/>
            <person name="Leonard S."/>
            <person name="Rohlfing T."/>
            <person name="Rock S.M."/>
            <person name="Tin-Wollam A.-M."/>
            <person name="Abbott A."/>
            <person name="Minx P."/>
            <person name="Maupin R."/>
            <person name="Strowmatt C."/>
            <person name="Latreille P."/>
            <person name="Miller N."/>
            <person name="Johnson D."/>
            <person name="Murray J."/>
            <person name="Woessner J.P."/>
            <person name="Wendl M.C."/>
            <person name="Yang S.-P."/>
            <person name="Schultz B.R."/>
            <person name="Wallis J.W."/>
            <person name="Spieth J."/>
            <person name="Bieri T.A."/>
            <person name="Nelson J.O."/>
            <person name="Berkowicz N."/>
            <person name="Wohldmann P.E."/>
            <person name="Cook L.L."/>
            <person name="Hickenbotham M.T."/>
            <person name="Eldred J."/>
            <person name="Williams D."/>
            <person name="Bedell J.A."/>
            <person name="Mardis E.R."/>
            <person name="Clifton S.W."/>
            <person name="Chissoe S.L."/>
            <person name="Marra M.A."/>
            <person name="Raymond C."/>
            <person name="Haugen E."/>
            <person name="Gillett W."/>
            <person name="Zhou Y."/>
            <person name="James R."/>
            <person name="Phelps K."/>
            <person name="Iadanoto S."/>
            <person name="Bubb K."/>
            <person name="Simms E."/>
            <person name="Levy R."/>
            <person name="Clendenning J."/>
            <person name="Kaul R."/>
            <person name="Kent W.J."/>
            <person name="Furey T.S."/>
            <person name="Baertsch R.A."/>
            <person name="Brent M.R."/>
            <person name="Keibler E."/>
            <person name="Flicek P."/>
            <person name="Bork P."/>
            <person name="Suyama M."/>
            <person name="Bailey J.A."/>
            <person name="Portnoy M.E."/>
            <person name="Torrents D."/>
            <person name="Chinwalla A.T."/>
            <person name="Gish W.R."/>
            <person name="Eddy S.R."/>
            <person name="McPherson J.D."/>
            <person name="Olson M.V."/>
            <person name="Eichler E.E."/>
            <person name="Green E.D."/>
            <person name="Waterston R.H."/>
            <person name="Wilson R.K."/>
        </authorList>
    </citation>
    <scope>NUCLEOTIDE SEQUENCE [LARGE SCALE GENOMIC DNA]</scope>
</reference>
<reference key="6">
    <citation type="journal article" date="2003" name="Science">
        <title>Human chromosome 7: DNA sequence and biology.</title>
        <authorList>
            <person name="Scherer S.W."/>
            <person name="Cheung J."/>
            <person name="MacDonald J.R."/>
            <person name="Osborne L.R."/>
            <person name="Nakabayashi K."/>
            <person name="Herbrick J.-A."/>
            <person name="Carson A.R."/>
            <person name="Parker-Katiraee L."/>
            <person name="Skaug J."/>
            <person name="Khaja R."/>
            <person name="Zhang J."/>
            <person name="Hudek A.K."/>
            <person name="Li M."/>
            <person name="Haddad M."/>
            <person name="Duggan G.E."/>
            <person name="Fernandez B.A."/>
            <person name="Kanematsu E."/>
            <person name="Gentles S."/>
            <person name="Christopoulos C.C."/>
            <person name="Choufani S."/>
            <person name="Kwasnicka D."/>
            <person name="Zheng X.H."/>
            <person name="Lai Z."/>
            <person name="Nusskern D.R."/>
            <person name="Zhang Q."/>
            <person name="Gu Z."/>
            <person name="Lu F."/>
            <person name="Zeesman S."/>
            <person name="Nowaczyk M.J."/>
            <person name="Teshima I."/>
            <person name="Chitayat D."/>
            <person name="Shuman C."/>
            <person name="Weksberg R."/>
            <person name="Zackai E.H."/>
            <person name="Grebe T.A."/>
            <person name="Cox S.R."/>
            <person name="Kirkpatrick S.J."/>
            <person name="Rahman N."/>
            <person name="Friedman J.M."/>
            <person name="Heng H.H.Q."/>
            <person name="Pelicci P.G."/>
            <person name="Lo-Coco F."/>
            <person name="Belloni E."/>
            <person name="Shaffer L.G."/>
            <person name="Pober B."/>
            <person name="Morton C.C."/>
            <person name="Gusella J.F."/>
            <person name="Bruns G.A.P."/>
            <person name="Korf B.R."/>
            <person name="Quade B.J."/>
            <person name="Ligon A.H."/>
            <person name="Ferguson H."/>
            <person name="Higgins A.W."/>
            <person name="Leach N.T."/>
            <person name="Herrick S.R."/>
            <person name="Lemyre E."/>
            <person name="Farra C.G."/>
            <person name="Kim H.-G."/>
            <person name="Summers A.M."/>
            <person name="Gripp K.W."/>
            <person name="Roberts W."/>
            <person name="Szatmari P."/>
            <person name="Winsor E.J.T."/>
            <person name="Grzeschik K.-H."/>
            <person name="Teebi A."/>
            <person name="Minassian B.A."/>
            <person name="Kere J."/>
            <person name="Armengol L."/>
            <person name="Pujana M.A."/>
            <person name="Estivill X."/>
            <person name="Wilson M.D."/>
            <person name="Koop B.F."/>
            <person name="Tosi S."/>
            <person name="Moore G.E."/>
            <person name="Boright A.P."/>
            <person name="Zlotorynski E."/>
            <person name="Kerem B."/>
            <person name="Kroisel P.M."/>
            <person name="Petek E."/>
            <person name="Oscier D.G."/>
            <person name="Mould S.J."/>
            <person name="Doehner H."/>
            <person name="Doehner K."/>
            <person name="Rommens J.M."/>
            <person name="Vincent J.B."/>
            <person name="Venter J.C."/>
            <person name="Li P.W."/>
            <person name="Mural R.J."/>
            <person name="Adams M.D."/>
            <person name="Tsui L.-C."/>
        </authorList>
    </citation>
    <scope>NUCLEOTIDE SEQUENCE [LARGE SCALE GENOMIC DNA]</scope>
</reference>
<reference key="7">
    <citation type="submission" date="2005-07" db="EMBL/GenBank/DDBJ databases">
        <authorList>
            <person name="Mural R.J."/>
            <person name="Istrail S."/>
            <person name="Sutton G.G."/>
            <person name="Florea L."/>
            <person name="Halpern A.L."/>
            <person name="Mobarry C.M."/>
            <person name="Lippert R."/>
            <person name="Walenz B."/>
            <person name="Shatkay H."/>
            <person name="Dew I."/>
            <person name="Miller J.R."/>
            <person name="Flanigan M.J."/>
            <person name="Edwards N.J."/>
            <person name="Bolanos R."/>
            <person name="Fasulo D."/>
            <person name="Halldorsson B.V."/>
            <person name="Hannenhalli S."/>
            <person name="Turner R."/>
            <person name="Yooseph S."/>
            <person name="Lu F."/>
            <person name="Nusskern D.R."/>
            <person name="Shue B.C."/>
            <person name="Zheng X.H."/>
            <person name="Zhong F."/>
            <person name="Delcher A.L."/>
            <person name="Huson D.H."/>
            <person name="Kravitz S.A."/>
            <person name="Mouchard L."/>
            <person name="Reinert K."/>
            <person name="Remington K.A."/>
            <person name="Clark A.G."/>
            <person name="Waterman M.S."/>
            <person name="Eichler E.E."/>
            <person name="Adams M.D."/>
            <person name="Hunkapiller M.W."/>
            <person name="Myers E.W."/>
            <person name="Venter J.C."/>
        </authorList>
    </citation>
    <scope>NUCLEOTIDE SEQUENCE [LARGE SCALE GENOMIC DNA]</scope>
</reference>
<reference key="8">
    <citation type="journal article" date="2004" name="Genome Res.">
        <title>The status, quality, and expansion of the NIH full-length cDNA project: the Mammalian Gene Collection (MGC).</title>
        <authorList>
            <consortium name="The MGC Project Team"/>
        </authorList>
    </citation>
    <scope>NUCLEOTIDE SEQUENCE [LARGE SCALE MRNA] (ISOFORM 1)</scope>
    <scope>NUCLEOTIDE SEQUENCE [LARGE SCALE MRNA] OF 342-523 (ISOFORM 4)</scope>
</reference>
<reference key="9">
    <citation type="journal article" date="2003" name="DNA Res.">
        <title>Characterization of long cDNA clones from human adult spleen. II. The complete sequences of 81 cDNA clones.</title>
        <authorList>
            <person name="Jikuya H."/>
            <person name="Takano J."/>
            <person name="Kikuno R."/>
            <person name="Hirosawa M."/>
            <person name="Nagase T."/>
            <person name="Nomura N."/>
            <person name="Ohara O."/>
        </authorList>
    </citation>
    <scope>NUCLEOTIDE SEQUENCE [LARGE SCALE MRNA] OF 138-523 (ISOFORM 2)</scope>
    <source>
        <tissue>Spleen</tissue>
    </source>
</reference>
<reference key="10">
    <citation type="journal article" date="2006" name="Cell">
        <title>Global, in vivo, and site-specific phosphorylation dynamics in signaling networks.</title>
        <authorList>
            <person name="Olsen J.V."/>
            <person name="Blagoev B."/>
            <person name="Gnad F."/>
            <person name="Macek B."/>
            <person name="Kumar C."/>
            <person name="Mortensen P."/>
            <person name="Mann M."/>
        </authorList>
    </citation>
    <scope>IDENTIFICATION BY MASS SPECTROMETRY [LARGE SCALE ANALYSIS]</scope>
    <source>
        <tissue>Cervix carcinoma</tissue>
    </source>
</reference>
<reference key="11">
    <citation type="journal article" date="2008" name="Biochem. J.">
        <title>N-glycosylation analysis of the human Tweety family of putative chloride ion channels supports a penta-spanning membrane arrangement: impact of N-glycosylation on cellular processing of Tweety homologue 2 (TTYH2).</title>
        <authorList>
            <person name="He Y."/>
            <person name="Ramsay A.J."/>
            <person name="Hunt M.L."/>
            <person name="Whitbread A.K."/>
            <person name="Myers S.A."/>
            <person name="Hooper J.D."/>
        </authorList>
    </citation>
    <scope>GLYCOSYLATION AT ASN-351</scope>
    <scope>MUTAGENESIS OF ASN-351 AND THR-353</scope>
    <scope>TOPOLOGY</scope>
</reference>
<reference key="12">
    <citation type="journal article" date="2008" name="J. Biol. Chem.">
        <title>The ubiquitin-protein ligase Nedd4-2 differentially interacts with and regulates members of the Tweety family of chloride ion channels.</title>
        <authorList>
            <person name="He Y."/>
            <person name="Hryciw D.H."/>
            <person name="Carroll M.L."/>
            <person name="Myers S.A."/>
            <person name="Whitbread A.K."/>
            <person name="Kumar S."/>
            <person name="Poronnik P."/>
            <person name="Hooper J.D."/>
        </authorList>
    </citation>
    <scope>INTERACTION WITH NEDD4L</scope>
    <scope>UBIQUITINATION BY NEDD4L</scope>
</reference>
<reference key="13">
    <citation type="journal article" date="2008" name="J. Proteome Res.">
        <title>Combining protein-based IMAC, peptide-based IMAC, and MudPIT for efficient phosphoproteomic analysis.</title>
        <authorList>
            <person name="Cantin G.T."/>
            <person name="Yi W."/>
            <person name="Lu B."/>
            <person name="Park S.K."/>
            <person name="Xu T."/>
            <person name="Lee J.-D."/>
            <person name="Yates J.R. III"/>
        </authorList>
    </citation>
    <scope>IDENTIFICATION BY MASS SPECTROMETRY [LARGE SCALE ANALYSIS]</scope>
    <source>
        <tissue>Cervix carcinoma</tissue>
    </source>
</reference>
<reference key="14">
    <citation type="journal article" date="2009" name="J. Proteome Res.">
        <title>Glycoproteomics analysis of human liver tissue by combination of multiple enzyme digestion and hydrazide chemistry.</title>
        <authorList>
            <person name="Chen R."/>
            <person name="Jiang X."/>
            <person name="Sun D."/>
            <person name="Han G."/>
            <person name="Wang F."/>
            <person name="Ye M."/>
            <person name="Wang L."/>
            <person name="Zou H."/>
        </authorList>
    </citation>
    <scope>GLYCOSYLATION [LARGE SCALE ANALYSIS] AT ASN-144</scope>
    <source>
        <tissue>Liver</tissue>
    </source>
</reference>
<reference key="15">
    <citation type="journal article" date="2011" name="Sci. Signal.">
        <title>System-wide temporal characterization of the proteome and phosphoproteome of human embryonic stem cell differentiation.</title>
        <authorList>
            <person name="Rigbolt K.T."/>
            <person name="Prokhorova T.A."/>
            <person name="Akimov V."/>
            <person name="Henningsen J."/>
            <person name="Johansen P.T."/>
            <person name="Kratchmarova I."/>
            <person name="Kassem M."/>
            <person name="Mann M."/>
            <person name="Olsen J.V."/>
            <person name="Blagoev B."/>
        </authorList>
    </citation>
    <scope>PHOSPHORYLATION [LARGE SCALE ANALYSIS] AT SER-522</scope>
    <scope>IDENTIFICATION BY MASS SPECTROMETRY [LARGE SCALE ANALYSIS]</scope>
</reference>
<reference evidence="17" key="16">
    <citation type="journal article" date="2021" name="Nat. Commun.">
        <title>Cryo-EM structures of the TTYH family reveal a novel architecture for lipid interactions.</title>
        <authorList>
            <person name="Sukalskaia A."/>
            <person name="Straub M.S."/>
            <person name="Deneka D."/>
            <person name="Sawicka M."/>
            <person name="Dutzler R."/>
        </authorList>
    </citation>
    <scope>STRUCTURE BY ELECTRON MICROSCOPY (3.20 ANGSTROMS) OF 2-523</scope>
    <scope>SUBUNIT</scope>
    <scope>SUBCELLULAR LOCATION</scope>
    <scope>DISULFIDE BOND</scope>
    <scope>GLYCOSYLATION AT ASN-126; ASN-144 AND ASN-351</scope>
    <scope>CAUTION</scope>
</reference>
<comment type="function">
    <text evidence="1 6">Calcium-independent, swelling-dependent volume-regulated anion channel (VRAC-swell) which plays a pivotal role in the process of regulatory volume decrease (RVD) in the brain through the efflux of anions like chloride and organic osmolytes like glutamate (By similarity). Probable large-conductance Ca(2+)-activated chloride channel (PubMed:15010458).</text>
</comment>
<comment type="catalytic activity">
    <reaction evidence="6">
        <text>chloride(in) = chloride(out)</text>
        <dbReference type="Rhea" id="RHEA:29823"/>
        <dbReference type="ChEBI" id="CHEBI:17996"/>
    </reaction>
</comment>
<comment type="catalytic activity">
    <reaction evidence="1">
        <text>L-glutamate(out) = L-glutamate(in)</text>
        <dbReference type="Rhea" id="RHEA:66336"/>
        <dbReference type="ChEBI" id="CHEBI:29985"/>
    </reaction>
    <physiologicalReaction direction="right-to-left" evidence="1">
        <dbReference type="Rhea" id="RHEA:66338"/>
    </physiologicalReaction>
</comment>
<comment type="subunit">
    <text evidence="1 8 10">Homotetramer; disulfide-linked (By similarity). Homodimer (PubMed:34385445). Interacts with NEDD4L (PubMed:18577513).</text>
</comment>
<comment type="interaction">
    <interactant intactId="EBI-2116541">
        <id>Q9C0H2</id>
    </interactant>
    <interactant intactId="EBI-1564678">
        <id>Q96J02</id>
        <label>ITCH</label>
    </interactant>
    <organismsDiffer>false</organismsDiffer>
    <experiments>2</experiments>
</comment>
<comment type="subcellular location">
    <subcellularLocation>
        <location evidence="6 10">Cell membrane</location>
        <topology evidence="4">Multi-pass membrane protein</topology>
    </subcellularLocation>
</comment>
<comment type="alternative products">
    <event type="alternative splicing"/>
    <isoform>
        <id>Q9C0H2-1</id>
        <name>1</name>
        <sequence type="displayed"/>
    </isoform>
    <isoform>
        <id>Q9C0H2-2</id>
        <name>2</name>
        <sequence type="described" ref="VSP_029770"/>
    </isoform>
    <isoform>
        <id>Q9C0H2-3</id>
        <name>3</name>
        <sequence type="described" ref="VSP_029769"/>
    </isoform>
    <isoform>
        <id>Q9C0H2-4</id>
        <name>4</name>
        <sequence type="described" ref="VSP_042220"/>
    </isoform>
</comment>
<comment type="tissue specificity">
    <text evidence="6">Expressed in excitable tissues. Expressed in the brain, heart, skeletal muscle, colon, spleen, kidney and peripheral blood leukocytes.</text>
</comment>
<comment type="PTM">
    <text evidence="8">Ubiquitinated by NEDD4L.</text>
</comment>
<comment type="PTM">
    <text evidence="6 7 9">N-Glycosylated (PubMed:15010458, PubMed:18260827, PubMed:19159218). Contains high-mannose, hybrid and complex oligosaccharides (PubMed:18260827).</text>
</comment>
<comment type="similarity">
    <text evidence="14">Belongs to the tweety family.</text>
</comment>
<comment type="caution">
    <text evidence="10">According to PubMed:34385445, lacks Ca(2+)-activated chloride channel and swelling-dependent volume-regulated anion channel activities.</text>
</comment>
<comment type="sequence caution" evidence="14">
    <conflict type="erroneous initiation">
        <sequence resource="EMBL-CDS" id="BAB21782"/>
    </conflict>
    <text>Extended N-terminus.</text>
</comment>
<comment type="sequence caution" evidence="14">
    <conflict type="erroneous gene model prediction">
        <sequence resource="EMBL-CDS" id="EAL23958"/>
    </conflict>
</comment>
<sequence>MAGVSYAAPWWVSLLHRLPHFDLSWEATSSQFRPEDTDYQQALLLLGAAALACLALDLLFLLFYSFWLCCRRRKSEEHLDADCCCTAWCVIIATLVCSAGIAVGFYGNGETSDGIHRATYSLRHANRTVAGVQDRVWDTAVGLNHTAEPSLQTLERQLAGRPEPLRAVQRLQGLLETLLGYTAAIPFWRNTAVSLEVLAEQVDLYDWYRWLGYLGLLLLDVIICLLVLVGLIRSSKGILVGVCLLGVLALVISWGALGLELAVSVGSSDFCVDPDAYVTKMVEEYSVLSGDILQYYLACSPRAANPFQQKLSGSHKALVEMQDVVAELLRTVPWEQPATKDPLLRVQEVLNGTEVNLQHLTALVDCRSLHLDYVQALTGFCYDGVEGLIYLALFSFVTALMFSSIVCSVPHTWQQKRGPDEDGEEEAAPGPRQAHDSLYRVHMPSLYSCGSSYGSETSIPAAAHTVSNAPVTEYMSQNANFQNPRCENTPLIGRESPPPSYTSSMRAKYLATSQPRPDSSGSH</sequence>
<proteinExistence type="evidence at protein level"/>
<organism>
    <name type="scientific">Homo sapiens</name>
    <name type="common">Human</name>
    <dbReference type="NCBI Taxonomy" id="9606"/>
    <lineage>
        <taxon>Eukaryota</taxon>
        <taxon>Metazoa</taxon>
        <taxon>Chordata</taxon>
        <taxon>Craniata</taxon>
        <taxon>Vertebrata</taxon>
        <taxon>Euteleostomi</taxon>
        <taxon>Mammalia</taxon>
        <taxon>Eutheria</taxon>
        <taxon>Euarchontoglires</taxon>
        <taxon>Primates</taxon>
        <taxon>Haplorrhini</taxon>
        <taxon>Catarrhini</taxon>
        <taxon>Hominidae</taxon>
        <taxon>Homo</taxon>
    </lineage>
</organism>
<gene>
    <name type="primary">TTYH3</name>
    <name type="synonym">KIAA1691</name>
</gene>
<name>TTYH3_HUMAN</name>
<dbReference type="EMBL" id="AB162931">
    <property type="protein sequence ID" value="BAD20190.1"/>
    <property type="molecule type" value="mRNA"/>
</dbReference>
<dbReference type="EMBL" id="AB051478">
    <property type="protein sequence ID" value="BAB21782.2"/>
    <property type="status" value="ALT_INIT"/>
    <property type="molecule type" value="mRNA"/>
</dbReference>
<dbReference type="EMBL" id="AK124608">
    <property type="protein sequence ID" value="BAC85898.1"/>
    <property type="molecule type" value="mRNA"/>
</dbReference>
<dbReference type="EMBL" id="AC006028">
    <property type="status" value="NOT_ANNOTATED_CDS"/>
    <property type="molecule type" value="Genomic_DNA"/>
</dbReference>
<dbReference type="EMBL" id="AC073462">
    <property type="status" value="NOT_ANNOTATED_CDS"/>
    <property type="molecule type" value="Genomic_DNA"/>
</dbReference>
<dbReference type="EMBL" id="CH236953">
    <property type="protein sequence ID" value="EAL23958.1"/>
    <property type="status" value="ALT_SEQ"/>
    <property type="molecule type" value="Genomic_DNA"/>
</dbReference>
<dbReference type="EMBL" id="CH471144">
    <property type="protein sequence ID" value="EAW87266.1"/>
    <property type="molecule type" value="Genomic_DNA"/>
</dbReference>
<dbReference type="EMBL" id="BC131824">
    <property type="protein sequence ID" value="AAI31825.1"/>
    <property type="molecule type" value="mRNA"/>
</dbReference>
<dbReference type="EMBL" id="BC152447">
    <property type="protein sequence ID" value="AAI52448.1"/>
    <property type="molecule type" value="mRNA"/>
</dbReference>
<dbReference type="EMBL" id="BE263005">
    <property type="status" value="NOT_ANNOTATED_CDS"/>
    <property type="molecule type" value="mRNA"/>
</dbReference>
<dbReference type="EMBL" id="AK074158">
    <property type="protein sequence ID" value="BAB84984.1"/>
    <property type="molecule type" value="mRNA"/>
</dbReference>
<dbReference type="CCDS" id="CCDS34588.1">
    <molecule id="Q9C0H2-1"/>
</dbReference>
<dbReference type="RefSeq" id="NP_079526.1">
    <molecule id="Q9C0H2-1"/>
    <property type="nucleotide sequence ID" value="NM_025250.3"/>
</dbReference>
<dbReference type="RefSeq" id="XP_011513837.1">
    <property type="nucleotide sequence ID" value="XM_011515535.2"/>
</dbReference>
<dbReference type="RefSeq" id="XP_016868145.1">
    <property type="nucleotide sequence ID" value="XM_017012656.1"/>
</dbReference>
<dbReference type="PDB" id="7P5C">
    <property type="method" value="EM"/>
    <property type="resolution" value="3.20 A"/>
    <property type="chains" value="A/B=2-523"/>
</dbReference>
<dbReference type="PDBsum" id="7P5C"/>
<dbReference type="EMDB" id="EMD-13198"/>
<dbReference type="SMR" id="Q9C0H2"/>
<dbReference type="BioGRID" id="123277">
    <property type="interactions" value="167"/>
</dbReference>
<dbReference type="FunCoup" id="Q9C0H2">
    <property type="interactions" value="1153"/>
</dbReference>
<dbReference type="IntAct" id="Q9C0H2">
    <property type="interactions" value="63"/>
</dbReference>
<dbReference type="MINT" id="Q9C0H2"/>
<dbReference type="STRING" id="9606.ENSP00000258796"/>
<dbReference type="TCDB" id="1.A.48.1.4">
    <property type="family name" value="the anion channel tweety (tweety) family"/>
</dbReference>
<dbReference type="GlyConnect" id="1671">
    <property type="glycosylation" value="2 N-Linked glycans (1 site)"/>
</dbReference>
<dbReference type="GlyCosmos" id="Q9C0H2">
    <property type="glycosylation" value="3 sites, 1 glycan"/>
</dbReference>
<dbReference type="GlyGen" id="Q9C0H2">
    <property type="glycosylation" value="4 sites, 7 N-linked glycans (2 sites), 1 O-linked glycan (1 site)"/>
</dbReference>
<dbReference type="iPTMnet" id="Q9C0H2"/>
<dbReference type="PhosphoSitePlus" id="Q9C0H2"/>
<dbReference type="SwissPalm" id="Q9C0H2"/>
<dbReference type="BioMuta" id="TTYH3"/>
<dbReference type="DMDM" id="162416242"/>
<dbReference type="jPOST" id="Q9C0H2"/>
<dbReference type="MassIVE" id="Q9C0H2"/>
<dbReference type="PaxDb" id="9606-ENSP00000258796"/>
<dbReference type="PeptideAtlas" id="Q9C0H2"/>
<dbReference type="ProteomicsDB" id="80038">
    <molecule id="Q9C0H2-1"/>
</dbReference>
<dbReference type="ProteomicsDB" id="80039">
    <molecule id="Q9C0H2-2"/>
</dbReference>
<dbReference type="ProteomicsDB" id="80040">
    <molecule id="Q9C0H2-3"/>
</dbReference>
<dbReference type="ProteomicsDB" id="80041">
    <molecule id="Q9C0H2-4"/>
</dbReference>
<dbReference type="Pumba" id="Q9C0H2"/>
<dbReference type="Antibodypedia" id="43641">
    <property type="antibodies" value="26 antibodies from 10 providers"/>
</dbReference>
<dbReference type="DNASU" id="80727"/>
<dbReference type="Ensembl" id="ENST00000258796.12">
    <molecule id="Q9C0H2-1"/>
    <property type="protein sequence ID" value="ENSP00000258796.7"/>
    <property type="gene ID" value="ENSG00000136295.16"/>
</dbReference>
<dbReference type="Ensembl" id="ENST00000403167.5">
    <molecule id="Q9C0H2-3"/>
    <property type="protein sequence ID" value="ENSP00000385015.1"/>
    <property type="gene ID" value="ENSG00000136295.16"/>
</dbReference>
<dbReference type="Ensembl" id="ENST00000407643.5">
    <molecule id="Q9C0H2-2"/>
    <property type="protein sequence ID" value="ENSP00000385316.1"/>
    <property type="gene ID" value="ENSG00000136295.16"/>
</dbReference>
<dbReference type="Ensembl" id="ENST00000429448.2">
    <molecule id="Q9C0H2-4"/>
    <property type="protein sequence ID" value="ENSP00000413757.2"/>
    <property type="gene ID" value="ENSG00000136295.16"/>
</dbReference>
<dbReference type="GeneID" id="80727"/>
<dbReference type="KEGG" id="hsa:80727"/>
<dbReference type="MANE-Select" id="ENST00000258796.12">
    <property type="protein sequence ID" value="ENSP00000258796.7"/>
    <property type="RefSeq nucleotide sequence ID" value="NM_025250.3"/>
    <property type="RefSeq protein sequence ID" value="NP_079526.1"/>
</dbReference>
<dbReference type="UCSC" id="uc003smp.4">
    <molecule id="Q9C0H2-1"/>
    <property type="organism name" value="human"/>
</dbReference>
<dbReference type="AGR" id="HGNC:22222"/>
<dbReference type="CTD" id="80727"/>
<dbReference type="DisGeNET" id="80727"/>
<dbReference type="GeneCards" id="TTYH3"/>
<dbReference type="HGNC" id="HGNC:22222">
    <property type="gene designation" value="TTYH3"/>
</dbReference>
<dbReference type="HPA" id="ENSG00000136295">
    <property type="expression patterns" value="Tissue enhanced (brain)"/>
</dbReference>
<dbReference type="MIM" id="608919">
    <property type="type" value="gene"/>
</dbReference>
<dbReference type="neXtProt" id="NX_Q9C0H2"/>
<dbReference type="OpenTargets" id="ENSG00000136295"/>
<dbReference type="PharmGKB" id="PA134908427"/>
<dbReference type="VEuPathDB" id="HostDB:ENSG00000136295"/>
<dbReference type="eggNOG" id="KOG4433">
    <property type="taxonomic scope" value="Eukaryota"/>
</dbReference>
<dbReference type="GeneTree" id="ENSGT00950000183060"/>
<dbReference type="HOGENOM" id="CLU_023758_0_1_1"/>
<dbReference type="InParanoid" id="Q9C0H2"/>
<dbReference type="OMA" id="HTWQHKR"/>
<dbReference type="OrthoDB" id="187568at2759"/>
<dbReference type="PAN-GO" id="Q9C0H2">
    <property type="GO annotations" value="3 GO annotations based on evolutionary models"/>
</dbReference>
<dbReference type="PhylomeDB" id="Q9C0H2"/>
<dbReference type="TreeFam" id="TF319025"/>
<dbReference type="PathwayCommons" id="Q9C0H2"/>
<dbReference type="Reactome" id="R-HSA-2672351">
    <property type="pathway name" value="Stimuli-sensing channels"/>
</dbReference>
<dbReference type="SignaLink" id="Q9C0H2"/>
<dbReference type="SIGNOR" id="Q9C0H2"/>
<dbReference type="BioGRID-ORCS" id="80727">
    <property type="hits" value="12 hits in 1156 CRISPR screens"/>
</dbReference>
<dbReference type="ChiTaRS" id="TTYH3">
    <property type="organism name" value="human"/>
</dbReference>
<dbReference type="GenomeRNAi" id="80727"/>
<dbReference type="Pharos" id="Q9C0H2">
    <property type="development level" value="Tbio"/>
</dbReference>
<dbReference type="PRO" id="PR:Q9C0H2"/>
<dbReference type="Proteomes" id="UP000005640">
    <property type="component" value="Chromosome 7"/>
</dbReference>
<dbReference type="RNAct" id="Q9C0H2">
    <property type="molecule type" value="protein"/>
</dbReference>
<dbReference type="Bgee" id="ENSG00000136295">
    <property type="expression patterns" value="Expressed in ventricular zone and 146 other cell types or tissues"/>
</dbReference>
<dbReference type="ExpressionAtlas" id="Q9C0H2">
    <property type="expression patterns" value="baseline and differential"/>
</dbReference>
<dbReference type="GO" id="GO:0034707">
    <property type="term" value="C:chloride channel complex"/>
    <property type="evidence" value="ECO:0007669"/>
    <property type="project" value="UniProtKB-KW"/>
</dbReference>
<dbReference type="GO" id="GO:0070062">
    <property type="term" value="C:extracellular exosome"/>
    <property type="evidence" value="ECO:0007005"/>
    <property type="project" value="UniProtKB"/>
</dbReference>
<dbReference type="GO" id="GO:0005886">
    <property type="term" value="C:plasma membrane"/>
    <property type="evidence" value="ECO:0000314"/>
    <property type="project" value="UniProtKB"/>
</dbReference>
<dbReference type="GO" id="GO:0005509">
    <property type="term" value="F:calcium ion binding"/>
    <property type="evidence" value="ECO:0000250"/>
    <property type="project" value="UniProtKB"/>
</dbReference>
<dbReference type="GO" id="GO:0005254">
    <property type="term" value="F:chloride channel activity"/>
    <property type="evidence" value="ECO:0000315"/>
    <property type="project" value="UniProtKB"/>
</dbReference>
<dbReference type="GO" id="GO:0005229">
    <property type="term" value="F:intracellularly calcium-gated chloride channel activity"/>
    <property type="evidence" value="ECO:0000314"/>
    <property type="project" value="FlyBase"/>
</dbReference>
<dbReference type="GO" id="GO:0072320">
    <property type="term" value="F:volume-sensitive chloride channel activity"/>
    <property type="evidence" value="ECO:0000318"/>
    <property type="project" value="GO_Central"/>
</dbReference>
<dbReference type="GO" id="GO:0006821">
    <property type="term" value="P:chloride transport"/>
    <property type="evidence" value="ECO:0000314"/>
    <property type="project" value="FlyBase"/>
</dbReference>
<dbReference type="GO" id="GO:0015813">
    <property type="term" value="P:L-glutamate transmembrane transport"/>
    <property type="evidence" value="ECO:0007669"/>
    <property type="project" value="Ensembl"/>
</dbReference>
<dbReference type="GO" id="GO:0034220">
    <property type="term" value="P:monoatomic ion transmembrane transport"/>
    <property type="evidence" value="ECO:0000304"/>
    <property type="project" value="Reactome"/>
</dbReference>
<dbReference type="CDD" id="cd07912">
    <property type="entry name" value="Tweety_N"/>
    <property type="match status" value="1"/>
</dbReference>
<dbReference type="InterPro" id="IPR006990">
    <property type="entry name" value="Tweety"/>
</dbReference>
<dbReference type="PANTHER" id="PTHR12424:SF4">
    <property type="entry name" value="PROTEIN TWEETY HOMOLOG 3"/>
    <property type="match status" value="1"/>
</dbReference>
<dbReference type="PANTHER" id="PTHR12424">
    <property type="entry name" value="TWEETY-RELATED"/>
    <property type="match status" value="1"/>
</dbReference>
<dbReference type="Pfam" id="PF04906">
    <property type="entry name" value="Tweety"/>
    <property type="match status" value="1"/>
</dbReference>
<feature type="chain" id="PRO_0000312251" description="Protein tweety homolog 3">
    <location>
        <begin position="1"/>
        <end position="523"/>
    </location>
</feature>
<feature type="topological domain" description="Extracellular" evidence="16">
    <location>
        <begin position="1"/>
        <end position="42"/>
    </location>
</feature>
<feature type="transmembrane region" description="Helical; Name=1" evidence="4">
    <location>
        <begin position="43"/>
        <end position="63"/>
    </location>
</feature>
<feature type="topological domain" description="Cytoplasmic" evidence="16">
    <location>
        <begin position="64"/>
        <end position="86"/>
    </location>
</feature>
<feature type="transmembrane region" description="Helical; Name=2" evidence="4">
    <location>
        <begin position="87"/>
        <end position="107"/>
    </location>
</feature>
<feature type="topological domain" description="Extracellular" evidence="16">
    <location>
        <begin position="108"/>
        <end position="211"/>
    </location>
</feature>
<feature type="transmembrane region" description="Helical; Name=3" evidence="4">
    <location>
        <begin position="212"/>
        <end position="232"/>
    </location>
</feature>
<feature type="topological domain" description="Cytoplasmic" evidence="16">
    <location>
        <begin position="233"/>
        <end position="236"/>
    </location>
</feature>
<feature type="transmembrane region" description="Helical; Name=4" evidence="4">
    <location>
        <begin position="237"/>
        <end position="257"/>
    </location>
</feature>
<feature type="topological domain" description="Extracellular" evidence="16">
    <location>
        <begin position="258"/>
        <end position="386"/>
    </location>
</feature>
<feature type="transmembrane region" description="Helical; Name=5" evidence="4">
    <location>
        <begin position="387"/>
        <end position="407"/>
    </location>
</feature>
<feature type="topological domain" description="Cytoplasmic" evidence="16">
    <location>
        <begin position="408"/>
        <end position="523"/>
    </location>
</feature>
<feature type="region of interest" description="Disordered" evidence="5">
    <location>
        <begin position="413"/>
        <end position="435"/>
    </location>
</feature>
<feature type="region of interest" description="Disordered" evidence="5">
    <location>
        <begin position="482"/>
        <end position="523"/>
    </location>
</feature>
<feature type="short sequence motif" description="PY-motif; mediates interaction with NEDD4L" evidence="2">
    <location>
        <begin position="498"/>
        <end position="501"/>
    </location>
</feature>
<feature type="compositionally biased region" description="Polar residues" evidence="5">
    <location>
        <begin position="501"/>
        <end position="523"/>
    </location>
</feature>
<feature type="binding site" evidence="1">
    <location>
        <position position="110"/>
    </location>
    <ligand>
        <name>Ca(2+)</name>
        <dbReference type="ChEBI" id="CHEBI:29108"/>
    </ligand>
</feature>
<feature type="binding site" evidence="1">
    <location>
        <position position="113"/>
    </location>
    <ligand>
        <name>Ca(2+)</name>
        <dbReference type="ChEBI" id="CHEBI:29108"/>
    </ligand>
</feature>
<feature type="site" description="Essential for the formation of the channel-pore" evidence="3">
    <location>
        <position position="161"/>
    </location>
</feature>
<feature type="modified residue" description="Phosphoserine" evidence="1">
    <location>
        <position position="496"/>
    </location>
</feature>
<feature type="modified residue" description="Phosphoserine" evidence="1">
    <location>
        <position position="504"/>
    </location>
</feature>
<feature type="modified residue" description="Phosphoserine" evidence="18">
    <location>
        <position position="522"/>
    </location>
</feature>
<feature type="glycosylation site" description="N-linked (GlcNAc...) asparagine" evidence="10">
    <location>
        <position position="126"/>
    </location>
</feature>
<feature type="glycosylation site" description="N-linked (GlcNAc...) asparagine" evidence="9 10">
    <location>
        <position position="144"/>
    </location>
</feature>
<feature type="glycosylation site" description="N-linked (GlcNAc...) asparagine" evidence="7 10 15">
    <location>
        <position position="351"/>
    </location>
</feature>
<feature type="disulfide bond" evidence="10">
    <location>
        <begin position="271"/>
        <end position="381"/>
    </location>
</feature>
<feature type="disulfide bond" evidence="10">
    <location>
        <begin position="299"/>
        <end position="366"/>
    </location>
</feature>
<feature type="splice variant" id="VSP_029769" description="In isoform 3." evidence="12">
    <original>MAGVSYAAPWWVSLLHRLPHFDLSWEATSSQFRPEDTDYQQALLLLGAAALACLALDLLFLLFYSFWLCCRRRKSEEHLDADCCCTAWCVIIATLVCSAGIAVGFYGNGETSDGIHRATYSLRHANRTVAGVQDRVWDTAVGLNHTAEPSLQTLERQLAGRPEPLRAVQRLQGLLETLLGYTAAIPFWRNTAVSLEVLAEQVDLYDWY</original>
    <variation>MPSGVPGCWPQLPLKGPWRPTPRPRVPVPWRTPRFAC</variation>
    <location>
        <begin position="1"/>
        <end position="208"/>
    </location>
</feature>
<feature type="splice variant" id="VSP_029770" description="In isoform 2." evidence="11">
    <location>
        <begin position="210"/>
        <end position="241"/>
    </location>
</feature>
<feature type="splice variant" id="VSP_042220" description="In isoform 4." evidence="13">
    <original>YTSSMRAKYLATSQPRPDSSGSH</original>
    <variation>RYLAALDSGSHAGWQFKPMDSARTLW</variation>
    <location>
        <begin position="501"/>
        <end position="523"/>
    </location>
</feature>
<feature type="mutagenesis site" description="Does not affect N-glycosylation state." evidence="6">
    <original>T</original>
    <variation>A</variation>
    <location>
        <position position="128"/>
    </location>
</feature>
<feature type="mutagenesis site" description="Does not affect N-glycosylation state." evidence="6">
    <original>T</original>
    <variation>A</variation>
    <location>
        <position position="146"/>
    </location>
</feature>
<feature type="mutagenesis site" description="Loss of N-glycosylation." evidence="7">
    <original>N</original>
    <variation>Q</variation>
    <location>
        <position position="351"/>
    </location>
</feature>
<feature type="mutagenesis site" description="Abolishes N-glycosylation." evidence="6 7">
    <original>T</original>
    <variation>A</variation>
    <location>
        <position position="353"/>
    </location>
</feature>
<feature type="mutagenesis site" description="Induces a stronger permeability to cations." evidence="6">
    <original>R</original>
    <variation>Q</variation>
    <location>
        <position position="367"/>
    </location>
</feature>
<feature type="mutagenesis site" description="Shows a different ion selectivity." evidence="6">
    <original>H</original>
    <variation>D</variation>
    <location>
        <position position="370"/>
    </location>
</feature>
<feature type="sequence conflict" description="In Ref. 9; BAB84984." evidence="14" ref="9">
    <original>Q</original>
    <variation>K</variation>
    <location>
        <position position="169"/>
    </location>
</feature>
<feature type="sequence conflict" description="In Ref. 8; BE263005." evidence="14" ref="8">
    <original>V</original>
    <variation>F</variation>
    <location>
        <position position="346"/>
    </location>
</feature>
<feature type="sequence conflict" description="In Ref. 9; BAB84984." evidence="14" ref="9">
    <original>S</original>
    <variation>R</variation>
    <location>
        <position position="520"/>
    </location>
</feature>
<feature type="helix" evidence="19">
    <location>
        <begin position="10"/>
        <end position="16"/>
    </location>
</feature>
<feature type="helix" evidence="19">
    <location>
        <begin position="37"/>
        <end position="65"/>
    </location>
</feature>
<feature type="helix" evidence="19">
    <location>
        <begin position="88"/>
        <end position="157"/>
    </location>
</feature>
<feature type="helix" evidence="19">
    <location>
        <begin position="162"/>
        <end position="184"/>
    </location>
</feature>
<feature type="helix" evidence="19">
    <location>
        <begin position="195"/>
        <end position="233"/>
    </location>
</feature>
<feature type="helix" evidence="19">
    <location>
        <begin position="236"/>
        <end position="272"/>
    </location>
</feature>
<feature type="helix" evidence="19">
    <location>
        <begin position="274"/>
        <end position="284"/>
    </location>
</feature>
<feature type="helix" evidence="19">
    <location>
        <begin position="290"/>
        <end position="298"/>
    </location>
</feature>
<feature type="helix" evidence="19">
    <location>
        <begin position="308"/>
        <end position="335"/>
    </location>
</feature>
<feature type="helix" evidence="19">
    <location>
        <begin position="337"/>
        <end position="339"/>
    </location>
</feature>
<feature type="helix" evidence="19">
    <location>
        <begin position="340"/>
        <end position="363"/>
    </location>
</feature>
<feature type="helix" evidence="19">
    <location>
        <begin position="366"/>
        <end position="408"/>
    </location>
</feature>
<feature type="helix" evidence="19">
    <location>
        <begin position="409"/>
        <end position="411"/>
    </location>
</feature>
<protein>
    <recommendedName>
        <fullName>Protein tweety homolog 3</fullName>
        <shortName>hTTY3</shortName>
    </recommendedName>
    <alternativeName>
        <fullName evidence="1">Volume-regulated anion channel subunit TTYH3</fullName>
    </alternativeName>
</protein>
<accession>Q9C0H2</accession>
<accession>A4D201</accession>
<accession>B7WP98</accession>
<accession>Q6L749</accession>
<accession>Q6ZVG3</accession>
<accession>Q8TEG6</accession>
<evidence type="ECO:0000250" key="1">
    <source>
        <dbReference type="UniProtKB" id="Q6P5F7"/>
    </source>
</evidence>
<evidence type="ECO:0000250" key="2">
    <source>
        <dbReference type="UniProtKB" id="Q9BSA4"/>
    </source>
</evidence>
<evidence type="ECO:0000250" key="3">
    <source>
        <dbReference type="UniProtKB" id="Q9D3A9"/>
    </source>
</evidence>
<evidence type="ECO:0000255" key="4"/>
<evidence type="ECO:0000256" key="5">
    <source>
        <dbReference type="SAM" id="MobiDB-lite"/>
    </source>
</evidence>
<evidence type="ECO:0000269" key="6">
    <source>
    </source>
</evidence>
<evidence type="ECO:0000269" key="7">
    <source>
    </source>
</evidence>
<evidence type="ECO:0000269" key="8">
    <source>
    </source>
</evidence>
<evidence type="ECO:0000269" key="9">
    <source>
    </source>
</evidence>
<evidence type="ECO:0000269" key="10">
    <source>
    </source>
</evidence>
<evidence type="ECO:0000303" key="11">
    <source>
    </source>
</evidence>
<evidence type="ECO:0000303" key="12">
    <source>
    </source>
</evidence>
<evidence type="ECO:0000303" key="13">
    <source>
    </source>
</evidence>
<evidence type="ECO:0000305" key="14"/>
<evidence type="ECO:0000305" key="15">
    <source>
    </source>
</evidence>
<evidence type="ECO:0000305" key="16">
    <source>
    </source>
</evidence>
<evidence type="ECO:0007744" key="17">
    <source>
        <dbReference type="PDB" id="7P5C"/>
    </source>
</evidence>
<evidence type="ECO:0007744" key="18">
    <source>
    </source>
</evidence>
<evidence type="ECO:0007829" key="19">
    <source>
        <dbReference type="PDB" id="7P5C"/>
    </source>
</evidence>
<keyword id="KW-0002">3D-structure</keyword>
<keyword id="KW-0025">Alternative splicing</keyword>
<keyword id="KW-0106">Calcium</keyword>
<keyword id="KW-1003">Cell membrane</keyword>
<keyword id="KW-0868">Chloride</keyword>
<keyword id="KW-0869">Chloride channel</keyword>
<keyword id="KW-1015">Disulfide bond</keyword>
<keyword id="KW-0325">Glycoprotein</keyword>
<keyword id="KW-0407">Ion channel</keyword>
<keyword id="KW-0406">Ion transport</keyword>
<keyword id="KW-0472">Membrane</keyword>
<keyword id="KW-0479">Metal-binding</keyword>
<keyword id="KW-0597">Phosphoprotein</keyword>
<keyword id="KW-1267">Proteomics identification</keyword>
<keyword id="KW-1185">Reference proteome</keyword>
<keyword id="KW-0812">Transmembrane</keyword>
<keyword id="KW-1133">Transmembrane helix</keyword>
<keyword id="KW-0813">Transport</keyword>
<keyword id="KW-0832">Ubl conjugation</keyword>